<name>AT10_ORYSJ</name>
<protein>
    <recommendedName>
        <fullName evidence="5">Acyl transferase 10</fullName>
        <shortName evidence="4">OsAT10</shortName>
        <ecNumber evidence="5">2.3.1.-</ecNumber>
    </recommendedName>
</protein>
<accession>Q69UE6</accession>
<accession>A3BD87</accession>
<accession>Q0DB78</accession>
<keyword id="KW-0012">Acyltransferase</keyword>
<keyword id="KW-1185">Reference proteome</keyword>
<keyword id="KW-0808">Transferase</keyword>
<feature type="chain" id="PRO_0000437780" description="Acyl transferase 10">
    <location>
        <begin position="1"/>
        <end position="443"/>
    </location>
</feature>
<feature type="active site" description="Proton acceptor" evidence="1">
    <location>
        <position position="182"/>
    </location>
</feature>
<feature type="active site" description="Proton acceptor" evidence="1">
    <location>
        <position position="386"/>
    </location>
</feature>
<feature type="sequence conflict" description="In Ref. 4; EAZ37526." evidence="5" ref="4">
    <original>V</original>
    <variation>L</variation>
    <location>
        <position position="337"/>
    </location>
</feature>
<proteinExistence type="inferred from homology"/>
<reference key="1">
    <citation type="journal article" date="2005" name="Nature">
        <title>The map-based sequence of the rice genome.</title>
        <authorList>
            <consortium name="International rice genome sequencing project (IRGSP)"/>
        </authorList>
    </citation>
    <scope>NUCLEOTIDE SEQUENCE [LARGE SCALE GENOMIC DNA]</scope>
    <source>
        <strain>cv. Nipponbare</strain>
    </source>
</reference>
<reference key="2">
    <citation type="journal article" date="2008" name="Nucleic Acids Res.">
        <title>The rice annotation project database (RAP-DB): 2008 update.</title>
        <authorList>
            <consortium name="The rice annotation project (RAP)"/>
        </authorList>
    </citation>
    <scope>GENOME REANNOTATION</scope>
    <source>
        <strain>cv. Nipponbare</strain>
    </source>
</reference>
<reference key="3">
    <citation type="journal article" date="2013" name="Rice">
        <title>Improvement of the Oryza sativa Nipponbare reference genome using next generation sequence and optical map data.</title>
        <authorList>
            <person name="Kawahara Y."/>
            <person name="de la Bastide M."/>
            <person name="Hamilton J.P."/>
            <person name="Kanamori H."/>
            <person name="McCombie W.R."/>
            <person name="Ouyang S."/>
            <person name="Schwartz D.C."/>
            <person name="Tanaka T."/>
            <person name="Wu J."/>
            <person name="Zhou S."/>
            <person name="Childs K.L."/>
            <person name="Davidson R.M."/>
            <person name="Lin H."/>
            <person name="Quesada-Ocampo L."/>
            <person name="Vaillancourt B."/>
            <person name="Sakai H."/>
            <person name="Lee S.S."/>
            <person name="Kim J."/>
            <person name="Numa H."/>
            <person name="Itoh T."/>
            <person name="Buell C.R."/>
            <person name="Matsumoto T."/>
        </authorList>
    </citation>
    <scope>GENOME REANNOTATION</scope>
    <source>
        <strain>cv. Nipponbare</strain>
    </source>
</reference>
<reference key="4">
    <citation type="journal article" date="2005" name="PLoS Biol.">
        <title>The genomes of Oryza sativa: a history of duplications.</title>
        <authorList>
            <person name="Yu J."/>
            <person name="Wang J."/>
            <person name="Lin W."/>
            <person name="Li S."/>
            <person name="Li H."/>
            <person name="Zhou J."/>
            <person name="Ni P."/>
            <person name="Dong W."/>
            <person name="Hu S."/>
            <person name="Zeng C."/>
            <person name="Zhang J."/>
            <person name="Zhang Y."/>
            <person name="Li R."/>
            <person name="Xu Z."/>
            <person name="Li S."/>
            <person name="Li X."/>
            <person name="Zheng H."/>
            <person name="Cong L."/>
            <person name="Lin L."/>
            <person name="Yin J."/>
            <person name="Geng J."/>
            <person name="Li G."/>
            <person name="Shi J."/>
            <person name="Liu J."/>
            <person name="Lv H."/>
            <person name="Li J."/>
            <person name="Wang J."/>
            <person name="Deng Y."/>
            <person name="Ran L."/>
            <person name="Shi X."/>
            <person name="Wang X."/>
            <person name="Wu Q."/>
            <person name="Li C."/>
            <person name="Ren X."/>
            <person name="Wang J."/>
            <person name="Wang X."/>
            <person name="Li D."/>
            <person name="Liu D."/>
            <person name="Zhang X."/>
            <person name="Ji Z."/>
            <person name="Zhao W."/>
            <person name="Sun Y."/>
            <person name="Zhang Z."/>
            <person name="Bao J."/>
            <person name="Han Y."/>
            <person name="Dong L."/>
            <person name="Ji J."/>
            <person name="Chen P."/>
            <person name="Wu S."/>
            <person name="Liu J."/>
            <person name="Xiao Y."/>
            <person name="Bu D."/>
            <person name="Tan J."/>
            <person name="Yang L."/>
            <person name="Ye C."/>
            <person name="Zhang J."/>
            <person name="Xu J."/>
            <person name="Zhou Y."/>
            <person name="Yu Y."/>
            <person name="Zhang B."/>
            <person name="Zhuang S."/>
            <person name="Wei H."/>
            <person name="Liu B."/>
            <person name="Lei M."/>
            <person name="Yu H."/>
            <person name="Li Y."/>
            <person name="Xu H."/>
            <person name="Wei S."/>
            <person name="He X."/>
            <person name="Fang L."/>
            <person name="Zhang Z."/>
            <person name="Zhang Y."/>
            <person name="Huang X."/>
            <person name="Su Z."/>
            <person name="Tong W."/>
            <person name="Li J."/>
            <person name="Tong Z."/>
            <person name="Li S."/>
            <person name="Ye J."/>
            <person name="Wang L."/>
            <person name="Fang L."/>
            <person name="Lei T."/>
            <person name="Chen C.-S."/>
            <person name="Chen H.-C."/>
            <person name="Xu Z."/>
            <person name="Li H."/>
            <person name="Huang H."/>
            <person name="Zhang F."/>
            <person name="Xu H."/>
            <person name="Li N."/>
            <person name="Zhao C."/>
            <person name="Li S."/>
            <person name="Dong L."/>
            <person name="Huang Y."/>
            <person name="Li L."/>
            <person name="Xi Y."/>
            <person name="Qi Q."/>
            <person name="Li W."/>
            <person name="Zhang B."/>
            <person name="Hu W."/>
            <person name="Zhang Y."/>
            <person name="Tian X."/>
            <person name="Jiao Y."/>
            <person name="Liang X."/>
            <person name="Jin J."/>
            <person name="Gao L."/>
            <person name="Zheng W."/>
            <person name="Hao B."/>
            <person name="Liu S.-M."/>
            <person name="Wang W."/>
            <person name="Yuan L."/>
            <person name="Cao M."/>
            <person name="McDermott J."/>
            <person name="Samudrala R."/>
            <person name="Wang J."/>
            <person name="Wong G.K.-S."/>
            <person name="Yang H."/>
        </authorList>
    </citation>
    <scope>NUCLEOTIDE SEQUENCE [LARGE SCALE GENOMIC DNA]</scope>
    <source>
        <strain>cv. Nipponbare</strain>
    </source>
</reference>
<reference key="5">
    <citation type="journal article" date="2010" name="Planta">
        <title>Down-regulation of four putative arabinoxylan feruloyl transferase genes from family PF02458 reduces ester-linked ferulate content in rice cell walls.</title>
        <authorList>
            <person name="Piston F."/>
            <person name="Uauy C."/>
            <person name="Fu L."/>
            <person name="Langston J."/>
            <person name="Labavitch J."/>
            <person name="Dubcovsky J."/>
        </authorList>
    </citation>
    <scope>FUNCTION</scope>
</reference>
<reference key="6">
    <citation type="journal article" date="2013" name="Plant Physiol.">
        <title>Overexpression of a BAHD acyltransferase, OsAt10, alters rice cell wall hydroxycinnamic acid content and saccharification.</title>
        <authorList>
            <person name="Bartley L.E."/>
            <person name="Peck M.L."/>
            <person name="Kim S.R."/>
            <person name="Ebert B."/>
            <person name="Manisseri C."/>
            <person name="Chiniquy D.M."/>
            <person name="Sykes R."/>
            <person name="Gao L."/>
            <person name="Rautengarten C."/>
            <person name="Vega-Sanchez M.E."/>
            <person name="Benke P.I."/>
            <person name="Canlas P.E."/>
            <person name="Cao P."/>
            <person name="Brewer S."/>
            <person name="Lin F."/>
            <person name="Smith W.L."/>
            <person name="Zhang X."/>
            <person name="Keasling J.D."/>
            <person name="Jentoff R.E."/>
            <person name="Foster S.B."/>
            <person name="Zhou J."/>
            <person name="Ziebell A."/>
            <person name="An G."/>
            <person name="Scheller H.V."/>
            <person name="Ronald P.C."/>
        </authorList>
    </citation>
    <scope>FUNCTION</scope>
    <scope>DISRUPTION PHENOTYPE</scope>
    <scope>GENE FAMILY</scope>
    <scope>NOMENCLATURE</scope>
</reference>
<dbReference type="EC" id="2.3.1.-" evidence="5"/>
<dbReference type="EMBL" id="AP004571">
    <property type="protein sequence ID" value="BAD33123.1"/>
    <property type="molecule type" value="Genomic_DNA"/>
</dbReference>
<dbReference type="EMBL" id="AP008212">
    <property type="protein sequence ID" value="BAF19895.2"/>
    <property type="status" value="ALT_SEQ"/>
    <property type="molecule type" value="Genomic_DNA"/>
</dbReference>
<dbReference type="EMBL" id="AP014962">
    <property type="protein sequence ID" value="BAS98448.1"/>
    <property type="molecule type" value="Genomic_DNA"/>
</dbReference>
<dbReference type="EMBL" id="CM000143">
    <property type="protein sequence ID" value="EAZ37526.1"/>
    <property type="molecule type" value="Genomic_DNA"/>
</dbReference>
<dbReference type="RefSeq" id="XP_015641801.1">
    <property type="nucleotide sequence ID" value="XM_015786315.1"/>
</dbReference>
<dbReference type="SMR" id="Q69UE6"/>
<dbReference type="STRING" id="39947.Q69UE6"/>
<dbReference type="PaxDb" id="39947-Q69UE6"/>
<dbReference type="EnsemblPlants" id="Os06t0594600-01">
    <property type="protein sequence ID" value="Os06t0594600-01"/>
    <property type="gene ID" value="Os06g0594600"/>
</dbReference>
<dbReference type="Gramene" id="Os06t0594600-01">
    <property type="protein sequence ID" value="Os06t0594600-01"/>
    <property type="gene ID" value="Os06g0594600"/>
</dbReference>
<dbReference type="KEGG" id="dosa:Os06g0594600"/>
<dbReference type="eggNOG" id="ENOG502RMG6">
    <property type="taxonomic scope" value="Eukaryota"/>
</dbReference>
<dbReference type="InParanoid" id="Q69UE6"/>
<dbReference type="OrthoDB" id="671439at2759"/>
<dbReference type="Proteomes" id="UP000000763">
    <property type="component" value="Chromosome 6"/>
</dbReference>
<dbReference type="Proteomes" id="UP000007752">
    <property type="component" value="Chromosome 6"/>
</dbReference>
<dbReference type="Proteomes" id="UP000059680">
    <property type="component" value="Chromosome 6"/>
</dbReference>
<dbReference type="GO" id="GO:0050734">
    <property type="term" value="F:hydroxycinnamoyltransferase activity"/>
    <property type="evidence" value="ECO:0007669"/>
    <property type="project" value="UniProtKB-ARBA"/>
</dbReference>
<dbReference type="Gene3D" id="3.30.559.10">
    <property type="entry name" value="Chloramphenicol acetyltransferase-like domain"/>
    <property type="match status" value="2"/>
</dbReference>
<dbReference type="InterPro" id="IPR023213">
    <property type="entry name" value="CAT-like_dom_sf"/>
</dbReference>
<dbReference type="InterPro" id="IPR050898">
    <property type="entry name" value="Plant_acyltransferase"/>
</dbReference>
<dbReference type="PANTHER" id="PTHR31147:SF11">
    <property type="entry name" value="ACYL TRANSFERASE 10"/>
    <property type="match status" value="1"/>
</dbReference>
<dbReference type="PANTHER" id="PTHR31147">
    <property type="entry name" value="ACYL TRANSFERASE 4"/>
    <property type="match status" value="1"/>
</dbReference>
<dbReference type="Pfam" id="PF02458">
    <property type="entry name" value="Transferase"/>
    <property type="match status" value="1"/>
</dbReference>
<organism>
    <name type="scientific">Oryza sativa subsp. japonica</name>
    <name type="common">Rice</name>
    <dbReference type="NCBI Taxonomy" id="39947"/>
    <lineage>
        <taxon>Eukaryota</taxon>
        <taxon>Viridiplantae</taxon>
        <taxon>Streptophyta</taxon>
        <taxon>Embryophyta</taxon>
        <taxon>Tracheophyta</taxon>
        <taxon>Spermatophyta</taxon>
        <taxon>Magnoliopsida</taxon>
        <taxon>Liliopsida</taxon>
        <taxon>Poales</taxon>
        <taxon>Poaceae</taxon>
        <taxon>BOP clade</taxon>
        <taxon>Oryzoideae</taxon>
        <taxon>Oryzeae</taxon>
        <taxon>Oryzinae</taxon>
        <taxon>Oryza</taxon>
        <taxon>Oryza sativa</taxon>
    </lineage>
</organism>
<gene>
    <name evidence="4" type="primary">AT10</name>
    <name evidence="7" type="ordered locus">Os06g0594600</name>
    <name evidence="5" type="ordered locus">LOC_Os06g39390</name>
    <name evidence="8" type="ORF">OsJ_21858</name>
    <name evidence="6" type="ORF">P0652A05.17</name>
</gene>
<comment type="function">
    <text evidence="2 3">Involved in the incorporation of ferulate into the cell wall. May act as arabinoxylan feruloyl transferase (PubMed:20012086). May function as p-coumaroyl-CoA transferase involved in glucuronoarabinoxylan modification (PubMed:23391577).</text>
</comment>
<comment type="disruption phenotype">
    <text evidence="3">Reduced seed mass.</text>
</comment>
<comment type="miscellaneous">
    <text evidence="3">The gain-of-function mutant OsAT10-D (T-DNA tagging) shows significant reduction of ferulate in leaf cell wall and strong increase p-coumarate in young leaf tissue but no discernible phenotypic alterations in vegetative development, lignin content, or lignin composition.</text>
</comment>
<comment type="similarity">
    <text evidence="5">Belongs to the plant acyltransferase family.</text>
</comment>
<comment type="sequence caution" evidence="5">
    <conflict type="erroneous gene model prediction">
        <sequence resource="EMBL-CDS" id="BAF19895"/>
    </conflict>
</comment>
<evidence type="ECO:0000250" key="1">
    <source>
        <dbReference type="UniProtKB" id="Q8W1W9"/>
    </source>
</evidence>
<evidence type="ECO:0000269" key="2">
    <source>
    </source>
</evidence>
<evidence type="ECO:0000269" key="3">
    <source>
    </source>
</evidence>
<evidence type="ECO:0000303" key="4">
    <source>
    </source>
</evidence>
<evidence type="ECO:0000305" key="5"/>
<evidence type="ECO:0000312" key="6">
    <source>
        <dbReference type="EMBL" id="BAD33123.1"/>
    </source>
</evidence>
<evidence type="ECO:0000312" key="7">
    <source>
        <dbReference type="EMBL" id="BAS98448.1"/>
    </source>
</evidence>
<evidence type="ECO:0000312" key="8">
    <source>
        <dbReference type="EMBL" id="EAZ37526.1"/>
    </source>
</evidence>
<sequence>MGVFAVTKVSEGPVRPSAATPSETLPLAWVDRYPTHRGLVESVHIYLRRDDAAVEAPCADGGVIVEGKKKNNKPAAAVVRGALADALVHYYPFAGRIVEDERSPGRPAVLCSGEGVYFVEAAANCTLADVNHLERPLLLSKEDLVPCPTPEQWPVEPHNSLAMIQVTTFTCGGFVIGLRTNHAVADGTGAAQFMNAVGDLARGLPEPRVKPIWARDRFPDPDIKPGPLPELPVLPLQYIAFDFPAAYLGKLKAQYAATAGASKICSAFDIVIAKLWQCRTRAIAADPAAAVKLCFFASARQVLGLETGYWGNAIFPVKVSAAAGEVAASSVIELVGVVREAKRRMAGECLRWAEGRTGGADPFQMTFDYESVYVSDWSKLGFNDVDYGYGAPSAAGPLVNCDLISSVIVMRAPAPLAGTRLLASCVTKEHADDFAARMREDLV</sequence>